<feature type="chain" id="PRO_0000105412" description="Cation/acetate symporter ActP">
    <location>
        <begin position="1"/>
        <end position="549"/>
    </location>
</feature>
<feature type="topological domain" description="Periplasmic" evidence="2">
    <location>
        <begin position="1"/>
        <end position="32"/>
    </location>
</feature>
<feature type="transmembrane region" description="Helical" evidence="2">
    <location>
        <begin position="33"/>
        <end position="55"/>
    </location>
</feature>
<feature type="topological domain" description="Cytoplasmic" evidence="2">
    <location>
        <begin position="56"/>
        <end position="75"/>
    </location>
</feature>
<feature type="transmembrane region" description="Helical" evidence="2">
    <location>
        <begin position="76"/>
        <end position="98"/>
    </location>
</feature>
<feature type="topological domain" description="Periplasmic" evidence="2">
    <location>
        <begin position="99"/>
        <end position="102"/>
    </location>
</feature>
<feature type="transmembrane region" description="Helical" evidence="2">
    <location>
        <begin position="103"/>
        <end position="125"/>
    </location>
</feature>
<feature type="topological domain" description="Cytoplasmic" evidence="2">
    <location>
        <begin position="126"/>
        <end position="145"/>
    </location>
</feature>
<feature type="transmembrane region" description="Helical" evidence="2">
    <location>
        <begin position="146"/>
        <end position="168"/>
    </location>
</feature>
<feature type="topological domain" description="Periplasmic" evidence="2">
    <location>
        <begin position="169"/>
        <end position="182"/>
    </location>
</feature>
<feature type="transmembrane region" description="Helical" evidence="2">
    <location>
        <begin position="183"/>
        <end position="205"/>
    </location>
</feature>
<feature type="topological domain" description="Cytoplasmic" evidence="2">
    <location>
        <begin position="206"/>
        <end position="211"/>
    </location>
</feature>
<feature type="transmembrane region" description="Helical" evidence="2">
    <location>
        <begin position="212"/>
        <end position="234"/>
    </location>
</feature>
<feature type="topological domain" description="Periplasmic" evidence="2">
    <location>
        <begin position="235"/>
        <end position="260"/>
    </location>
</feature>
<feature type="transmembrane region" description="Helical" evidence="2">
    <location>
        <begin position="261"/>
        <end position="283"/>
    </location>
</feature>
<feature type="topological domain" description="Cytoplasmic" evidence="2">
    <location>
        <begin position="284"/>
        <end position="302"/>
    </location>
</feature>
<feature type="transmembrane region" description="Helical" evidence="2">
    <location>
        <begin position="303"/>
        <end position="325"/>
    </location>
</feature>
<feature type="topological domain" description="Periplasmic" evidence="2">
    <location>
        <begin position="326"/>
        <end position="361"/>
    </location>
</feature>
<feature type="transmembrane region" description="Helical" evidence="2">
    <location>
        <begin position="362"/>
        <end position="384"/>
    </location>
</feature>
<feature type="topological domain" description="Cytoplasmic" evidence="2">
    <location>
        <begin position="385"/>
        <end position="403"/>
    </location>
</feature>
<feature type="transmembrane region" description="Helical" evidence="2">
    <location>
        <begin position="404"/>
        <end position="423"/>
    </location>
</feature>
<feature type="topological domain" description="Periplasmic" evidence="2">
    <location>
        <begin position="424"/>
        <end position="427"/>
    </location>
</feature>
<feature type="transmembrane region" description="Helical" evidence="2">
    <location>
        <begin position="428"/>
        <end position="450"/>
    </location>
</feature>
<feature type="topological domain" description="Cytoplasmic" evidence="2">
    <location>
        <begin position="451"/>
        <end position="461"/>
    </location>
</feature>
<feature type="transmembrane region" description="Helical" evidence="2">
    <location>
        <begin position="462"/>
        <end position="484"/>
    </location>
</feature>
<feature type="topological domain" description="Periplasmic" evidence="2">
    <location>
        <begin position="485"/>
        <end position="493"/>
    </location>
</feature>
<feature type="transmembrane region" description="Helical" evidence="2">
    <location>
        <begin position="494"/>
        <end position="516"/>
    </location>
</feature>
<feature type="topological domain" description="Cytoplasmic" evidence="2">
    <location>
        <begin position="517"/>
        <end position="549"/>
    </location>
</feature>
<organism>
    <name type="scientific">Salmonella paratyphi A (strain ATCC 9150 / SARB42)</name>
    <dbReference type="NCBI Taxonomy" id="295319"/>
    <lineage>
        <taxon>Bacteria</taxon>
        <taxon>Pseudomonadati</taxon>
        <taxon>Pseudomonadota</taxon>
        <taxon>Gammaproteobacteria</taxon>
        <taxon>Enterobacterales</taxon>
        <taxon>Enterobacteriaceae</taxon>
        <taxon>Salmonella</taxon>
    </lineage>
</organism>
<protein>
    <recommendedName>
        <fullName>Cation/acetate symporter ActP</fullName>
    </recommendedName>
    <alternativeName>
        <fullName>Acetate permease</fullName>
    </alternativeName>
    <alternativeName>
        <fullName>Acetate transporter ActP</fullName>
    </alternativeName>
</protein>
<proteinExistence type="inferred from homology"/>
<dbReference type="EMBL" id="CP000026">
    <property type="protein sequence ID" value="AAV79835.1"/>
    <property type="molecule type" value="Genomic_DNA"/>
</dbReference>
<dbReference type="RefSeq" id="WP_000832536.1">
    <property type="nucleotide sequence ID" value="NC_006511.1"/>
</dbReference>
<dbReference type="SMR" id="Q5PJ05"/>
<dbReference type="KEGG" id="spt:SPA4090"/>
<dbReference type="HOGENOM" id="CLU_018808_8_3_6"/>
<dbReference type="Proteomes" id="UP000008185">
    <property type="component" value="Chromosome"/>
</dbReference>
<dbReference type="GO" id="GO:0005886">
    <property type="term" value="C:plasma membrane"/>
    <property type="evidence" value="ECO:0007669"/>
    <property type="project" value="UniProtKB-SubCell"/>
</dbReference>
<dbReference type="GO" id="GO:0015123">
    <property type="term" value="F:acetate transmembrane transporter activity"/>
    <property type="evidence" value="ECO:0007669"/>
    <property type="project" value="UniProtKB-UniRule"/>
</dbReference>
<dbReference type="GO" id="GO:0043879">
    <property type="term" value="F:glycolate transmembrane transporter activity"/>
    <property type="evidence" value="ECO:0007669"/>
    <property type="project" value="InterPro"/>
</dbReference>
<dbReference type="GO" id="GO:0015293">
    <property type="term" value="F:symporter activity"/>
    <property type="evidence" value="ECO:0007669"/>
    <property type="project" value="UniProtKB-KW"/>
</dbReference>
<dbReference type="GO" id="GO:0006847">
    <property type="term" value="P:plasma membrane acetate transport"/>
    <property type="evidence" value="ECO:0007669"/>
    <property type="project" value="TreeGrafter"/>
</dbReference>
<dbReference type="GO" id="GO:0006814">
    <property type="term" value="P:sodium ion transport"/>
    <property type="evidence" value="ECO:0007669"/>
    <property type="project" value="UniProtKB-KW"/>
</dbReference>
<dbReference type="CDD" id="cd11480">
    <property type="entry name" value="SLC5sbd_u4"/>
    <property type="match status" value="1"/>
</dbReference>
<dbReference type="FunFam" id="1.20.1730.10:FF:000001">
    <property type="entry name" value="Cation/acetate symporter ActP"/>
    <property type="match status" value="1"/>
</dbReference>
<dbReference type="Gene3D" id="1.20.1730.10">
    <property type="entry name" value="Sodium/glucose cotransporter"/>
    <property type="match status" value="1"/>
</dbReference>
<dbReference type="HAMAP" id="MF_01426">
    <property type="entry name" value="Acet_symport_ActP"/>
    <property type="match status" value="1"/>
</dbReference>
<dbReference type="InterPro" id="IPR014083">
    <property type="entry name" value="Cation/Ac_symporter_ActP"/>
</dbReference>
<dbReference type="InterPro" id="IPR038377">
    <property type="entry name" value="Na/Glc_symporter_sf"/>
</dbReference>
<dbReference type="InterPro" id="IPR001734">
    <property type="entry name" value="Na/solute_symporter"/>
</dbReference>
<dbReference type="InterPro" id="IPR018212">
    <property type="entry name" value="Na/solute_symporter_CS"/>
</dbReference>
<dbReference type="InterPro" id="IPR050277">
    <property type="entry name" value="Sodium:Solute_Symporter"/>
</dbReference>
<dbReference type="NCBIfam" id="NF006903">
    <property type="entry name" value="PRK09395.1"/>
    <property type="match status" value="1"/>
</dbReference>
<dbReference type="NCBIfam" id="NF009135">
    <property type="entry name" value="PRK12488.1"/>
    <property type="match status" value="1"/>
</dbReference>
<dbReference type="NCBIfam" id="TIGR00813">
    <property type="entry name" value="sss"/>
    <property type="match status" value="1"/>
</dbReference>
<dbReference type="NCBIfam" id="TIGR02711">
    <property type="entry name" value="symport_actP"/>
    <property type="match status" value="1"/>
</dbReference>
<dbReference type="PANTHER" id="PTHR48086:SF6">
    <property type="entry name" value="CATION_ACETATE SYMPORTER ACTP"/>
    <property type="match status" value="1"/>
</dbReference>
<dbReference type="PANTHER" id="PTHR48086">
    <property type="entry name" value="SODIUM/PROLINE SYMPORTER-RELATED"/>
    <property type="match status" value="1"/>
</dbReference>
<dbReference type="Pfam" id="PF00474">
    <property type="entry name" value="SSF"/>
    <property type="match status" value="1"/>
</dbReference>
<dbReference type="PROSITE" id="PS00456">
    <property type="entry name" value="NA_SOLUT_SYMP_1"/>
    <property type="match status" value="1"/>
</dbReference>
<dbReference type="PROSITE" id="PS00457">
    <property type="entry name" value="NA_SOLUT_SYMP_2"/>
    <property type="match status" value="1"/>
</dbReference>
<dbReference type="PROSITE" id="PS50283">
    <property type="entry name" value="NA_SOLUT_SYMP_3"/>
    <property type="match status" value="1"/>
</dbReference>
<name>ACTP_SALPA</name>
<evidence type="ECO:0000250" key="1"/>
<evidence type="ECO:0000255" key="2"/>
<evidence type="ECO:0000305" key="3"/>
<sequence>MKRVLTALAAALPFAAHAADAISGAVERQPTNWQAIIMFLIFVVFTLGITYWASKRVRSRSDYYTAGGNITGFQNGLAIAGDYMSAASFLGISALVFTSGYDGLIYSLGFLVGWPIILFLIAERLRNLGRYTFADVASYRLKQGPIRILSACGSLVVVALYLIAQMVGAGKLIELLFGLNYHIAVVLVGVLMMMYVLFGGMLATTWVQIIKAVLLLFGASFMAFMVMKHVGFSFNNLFTEAMAVHPKGTAIMSPGGLVQDPISALSLGLGLMFGTAGLPHILMRFFTVSDAREARKSVFYATGFMGYFYILTFIIGFGAIMLVGANPAYKDAAGALIGGNNMAAVHLANAVGGNLFLGFISAVAFATILAVVAGLTLAGASAVSHDLYANVFRKGATEREELKVSKITVLVLGVIAIILGVLFENQNIAFMVGLAFAIAASCNFPIILLSMYWSKLTTRGAMLGGWLGLLTAVVLMILGPTIWVQILGHEKAIFPYEYPALFSISVAFLGIWFFSATDNSAEGNREREQFRAQFIRSQTGFGVQQGRAH</sequence>
<comment type="function">
    <text evidence="1">Transports acetate.</text>
</comment>
<comment type="subcellular location">
    <subcellularLocation>
        <location evidence="1">Cell inner membrane</location>
        <topology evidence="1">Multi-pass membrane protein</topology>
    </subcellularLocation>
</comment>
<comment type="similarity">
    <text evidence="3">Belongs to the sodium:solute symporter (SSF) (TC 2.A.21) family.</text>
</comment>
<keyword id="KW-0997">Cell inner membrane</keyword>
<keyword id="KW-1003">Cell membrane</keyword>
<keyword id="KW-0406">Ion transport</keyword>
<keyword id="KW-0472">Membrane</keyword>
<keyword id="KW-0915">Sodium</keyword>
<keyword id="KW-0739">Sodium transport</keyword>
<keyword id="KW-0769">Symport</keyword>
<keyword id="KW-0812">Transmembrane</keyword>
<keyword id="KW-1133">Transmembrane helix</keyword>
<keyword id="KW-0813">Transport</keyword>
<reference key="1">
    <citation type="journal article" date="2004" name="Nat. Genet.">
        <title>Comparison of genome degradation in Paratyphi A and Typhi, human-restricted serovars of Salmonella enterica that cause typhoid.</title>
        <authorList>
            <person name="McClelland M."/>
            <person name="Sanderson K.E."/>
            <person name="Clifton S.W."/>
            <person name="Latreille P."/>
            <person name="Porwollik S."/>
            <person name="Sabo A."/>
            <person name="Meyer R."/>
            <person name="Bieri T."/>
            <person name="Ozersky P."/>
            <person name="McLellan M."/>
            <person name="Harkins C.R."/>
            <person name="Wang C."/>
            <person name="Nguyen C."/>
            <person name="Berghoff A."/>
            <person name="Elliott G."/>
            <person name="Kohlberg S."/>
            <person name="Strong C."/>
            <person name="Du F."/>
            <person name="Carter J."/>
            <person name="Kremizki C."/>
            <person name="Layman D."/>
            <person name="Leonard S."/>
            <person name="Sun H."/>
            <person name="Fulton L."/>
            <person name="Nash W."/>
            <person name="Miner T."/>
            <person name="Minx P."/>
            <person name="Delehaunty K."/>
            <person name="Fronick C."/>
            <person name="Magrini V."/>
            <person name="Nhan M."/>
            <person name="Warren W."/>
            <person name="Florea L."/>
            <person name="Spieth J."/>
            <person name="Wilson R.K."/>
        </authorList>
    </citation>
    <scope>NUCLEOTIDE SEQUENCE [LARGE SCALE GENOMIC DNA]</scope>
    <source>
        <strain>ATCC 9150 / SARB42</strain>
    </source>
</reference>
<gene>
    <name type="primary">actP</name>
    <name type="ordered locus">SPA4090</name>
</gene>
<accession>Q5PJ05</accession>